<feature type="chain" id="PRO_1000052999" description="Large ribosomal subunit protein uL18">
    <location>
        <begin position="1"/>
        <end position="121"/>
    </location>
</feature>
<reference key="1">
    <citation type="journal article" date="2010" name="Genome Biol. Evol.">
        <title>Continuing evolution of Burkholderia mallei through genome reduction and large-scale rearrangements.</title>
        <authorList>
            <person name="Losada L."/>
            <person name="Ronning C.M."/>
            <person name="DeShazer D."/>
            <person name="Woods D."/>
            <person name="Fedorova N."/>
            <person name="Kim H.S."/>
            <person name="Shabalina S.A."/>
            <person name="Pearson T.R."/>
            <person name="Brinkac L."/>
            <person name="Tan P."/>
            <person name="Nandi T."/>
            <person name="Crabtree J."/>
            <person name="Badger J."/>
            <person name="Beckstrom-Sternberg S."/>
            <person name="Saqib M."/>
            <person name="Schutzer S.E."/>
            <person name="Keim P."/>
            <person name="Nierman W.C."/>
        </authorList>
    </citation>
    <scope>NUCLEOTIDE SEQUENCE [LARGE SCALE GENOMIC DNA]</scope>
    <source>
        <strain>SAVP1</strain>
    </source>
</reference>
<organism>
    <name type="scientific">Burkholderia mallei (strain SAVP1)</name>
    <dbReference type="NCBI Taxonomy" id="320388"/>
    <lineage>
        <taxon>Bacteria</taxon>
        <taxon>Pseudomonadati</taxon>
        <taxon>Pseudomonadota</taxon>
        <taxon>Betaproteobacteria</taxon>
        <taxon>Burkholderiales</taxon>
        <taxon>Burkholderiaceae</taxon>
        <taxon>Burkholderia</taxon>
        <taxon>pseudomallei group</taxon>
    </lineage>
</organism>
<evidence type="ECO:0000255" key="1">
    <source>
        <dbReference type="HAMAP-Rule" id="MF_01337"/>
    </source>
</evidence>
<evidence type="ECO:0000305" key="2"/>
<dbReference type="EMBL" id="CP000526">
    <property type="protein sequence ID" value="ABM52141.1"/>
    <property type="molecule type" value="Genomic_DNA"/>
</dbReference>
<dbReference type="RefSeq" id="WP_004197946.1">
    <property type="nucleotide sequence ID" value="NC_008785.1"/>
</dbReference>
<dbReference type="SMR" id="A1V887"/>
<dbReference type="GeneID" id="93061816"/>
<dbReference type="KEGG" id="bmv:BMASAVP1_A3153"/>
<dbReference type="HOGENOM" id="CLU_098841_0_1_4"/>
<dbReference type="GO" id="GO:0022625">
    <property type="term" value="C:cytosolic large ribosomal subunit"/>
    <property type="evidence" value="ECO:0007669"/>
    <property type="project" value="TreeGrafter"/>
</dbReference>
<dbReference type="GO" id="GO:0008097">
    <property type="term" value="F:5S rRNA binding"/>
    <property type="evidence" value="ECO:0007669"/>
    <property type="project" value="TreeGrafter"/>
</dbReference>
<dbReference type="GO" id="GO:0003735">
    <property type="term" value="F:structural constituent of ribosome"/>
    <property type="evidence" value="ECO:0007669"/>
    <property type="project" value="InterPro"/>
</dbReference>
<dbReference type="GO" id="GO:0006412">
    <property type="term" value="P:translation"/>
    <property type="evidence" value="ECO:0007669"/>
    <property type="project" value="UniProtKB-UniRule"/>
</dbReference>
<dbReference type="CDD" id="cd00432">
    <property type="entry name" value="Ribosomal_L18_L5e"/>
    <property type="match status" value="1"/>
</dbReference>
<dbReference type="FunFam" id="3.30.420.100:FF:000001">
    <property type="entry name" value="50S ribosomal protein L18"/>
    <property type="match status" value="1"/>
</dbReference>
<dbReference type="Gene3D" id="3.30.420.100">
    <property type="match status" value="1"/>
</dbReference>
<dbReference type="HAMAP" id="MF_01337_B">
    <property type="entry name" value="Ribosomal_uL18_B"/>
    <property type="match status" value="1"/>
</dbReference>
<dbReference type="InterPro" id="IPR004389">
    <property type="entry name" value="Ribosomal_uL18_bac-type"/>
</dbReference>
<dbReference type="InterPro" id="IPR005484">
    <property type="entry name" value="Ribosomal_uL18_bac/euk"/>
</dbReference>
<dbReference type="NCBIfam" id="TIGR00060">
    <property type="entry name" value="L18_bact"/>
    <property type="match status" value="1"/>
</dbReference>
<dbReference type="PANTHER" id="PTHR12899">
    <property type="entry name" value="39S RIBOSOMAL PROTEIN L18, MITOCHONDRIAL"/>
    <property type="match status" value="1"/>
</dbReference>
<dbReference type="PANTHER" id="PTHR12899:SF3">
    <property type="entry name" value="LARGE RIBOSOMAL SUBUNIT PROTEIN UL18M"/>
    <property type="match status" value="1"/>
</dbReference>
<dbReference type="Pfam" id="PF00861">
    <property type="entry name" value="Ribosomal_L18p"/>
    <property type="match status" value="1"/>
</dbReference>
<dbReference type="SUPFAM" id="SSF53137">
    <property type="entry name" value="Translational machinery components"/>
    <property type="match status" value="1"/>
</dbReference>
<name>RL18_BURMS</name>
<accession>A1V887</accession>
<comment type="function">
    <text evidence="1">This is one of the proteins that bind and probably mediate the attachment of the 5S RNA into the large ribosomal subunit, where it forms part of the central protuberance.</text>
</comment>
<comment type="subunit">
    <text evidence="1">Part of the 50S ribosomal subunit; part of the 5S rRNA/L5/L18/L25 subcomplex. Contacts the 5S and 23S rRNAs.</text>
</comment>
<comment type="similarity">
    <text evidence="1">Belongs to the universal ribosomal protein uL18 family.</text>
</comment>
<protein>
    <recommendedName>
        <fullName evidence="1">Large ribosomal subunit protein uL18</fullName>
    </recommendedName>
    <alternativeName>
        <fullName evidence="2">50S ribosomal protein L18</fullName>
    </alternativeName>
</protein>
<sequence>MDKTQSRLRRARQTRIKIAELQVARLAVHRTNTHIYAQVFSPCGTKVLASASTLEAEVRAQLADKSGKGGNVAAATLIGKRIAEKAKAAGIESVAFDRSGFRYHGRVKALAEAAREAGLKF</sequence>
<proteinExistence type="inferred from homology"/>
<keyword id="KW-0687">Ribonucleoprotein</keyword>
<keyword id="KW-0689">Ribosomal protein</keyword>
<keyword id="KW-0694">RNA-binding</keyword>
<keyword id="KW-0699">rRNA-binding</keyword>
<gene>
    <name evidence="1" type="primary">rplR</name>
    <name type="ordered locus">BMASAVP1_A3153</name>
</gene>